<reference key="1">
    <citation type="journal article" date="1999" name="J. Bacteriol.">
        <title>Characterization of a Pseudomonas aeruginosa fatty acid biosynthetic gene cluster: purification of acyl carrier protein (ACP) and malonyl-coenzyme A:ACP transacylase (fabD).</title>
        <authorList>
            <person name="Kutchma A.J."/>
            <person name="Hoang T.T."/>
            <person name="Schweizer H.P."/>
        </authorList>
    </citation>
    <scope>NUCLEOTIDE SEQUENCE [GENOMIC DNA]</scope>
    <source>
        <strain>ATCC 15692 / DSM 22644 / CIP 104116 / JCM 14847 / LMG 12228 / 1C / PRS 101 / PAO1</strain>
    </source>
</reference>
<reference key="2">
    <citation type="journal article" date="2000" name="Nature">
        <title>Complete genome sequence of Pseudomonas aeruginosa PAO1, an opportunistic pathogen.</title>
        <authorList>
            <person name="Stover C.K."/>
            <person name="Pham X.-Q.T."/>
            <person name="Erwin A.L."/>
            <person name="Mizoguchi S.D."/>
            <person name="Warrener P."/>
            <person name="Hickey M.J."/>
            <person name="Brinkman F.S.L."/>
            <person name="Hufnagle W.O."/>
            <person name="Kowalik D.J."/>
            <person name="Lagrou M."/>
            <person name="Garber R.L."/>
            <person name="Goltry L."/>
            <person name="Tolentino E."/>
            <person name="Westbrock-Wadman S."/>
            <person name="Yuan Y."/>
            <person name="Brody L.L."/>
            <person name="Coulter S.N."/>
            <person name="Folger K.R."/>
            <person name="Kas A."/>
            <person name="Larbig K."/>
            <person name="Lim R.M."/>
            <person name="Smith K.A."/>
            <person name="Spencer D.H."/>
            <person name="Wong G.K.-S."/>
            <person name="Wu Z."/>
            <person name="Paulsen I.T."/>
            <person name="Reizer J."/>
            <person name="Saier M.H. Jr."/>
            <person name="Hancock R.E.W."/>
            <person name="Lory S."/>
            <person name="Olson M.V."/>
        </authorList>
    </citation>
    <scope>NUCLEOTIDE SEQUENCE [LARGE SCALE GENOMIC DNA]</scope>
    <source>
        <strain>ATCC 15692 / DSM 22644 / CIP 104116 / JCM 14847 / LMG 12228 / 1C / PRS 101 / PAO1</strain>
    </source>
</reference>
<organism>
    <name type="scientific">Pseudomonas aeruginosa (strain ATCC 15692 / DSM 22644 / CIP 104116 / JCM 14847 / LMG 12228 / 1C / PRS 101 / PAO1)</name>
    <dbReference type="NCBI Taxonomy" id="208964"/>
    <lineage>
        <taxon>Bacteria</taxon>
        <taxon>Pseudomonadati</taxon>
        <taxon>Pseudomonadota</taxon>
        <taxon>Gammaproteobacteria</taxon>
        <taxon>Pseudomonadales</taxon>
        <taxon>Pseudomonadaceae</taxon>
        <taxon>Pseudomonas</taxon>
    </lineage>
</organism>
<comment type="function">
    <text evidence="2">Carrier of the growing fatty acid chain in fatty acid biosynthesis.</text>
</comment>
<comment type="pathway">
    <text evidence="2">Lipid metabolism; fatty acid biosynthesis.</text>
</comment>
<comment type="subcellular location">
    <subcellularLocation>
        <location evidence="2">Cytoplasm</location>
    </subcellularLocation>
</comment>
<comment type="PTM">
    <text evidence="2">4'-phosphopantetheine is transferred from CoA to a specific serine of apo-ACP by AcpS. This modification is essential for activity because fatty acids are bound in thioester linkage to the sulfhydryl of the prosthetic group.</text>
</comment>
<comment type="similarity">
    <text evidence="2">Belongs to the acyl carrier protein (ACP) family.</text>
</comment>
<protein>
    <recommendedName>
        <fullName evidence="2">Acyl carrier protein 1</fullName>
        <shortName evidence="2">ACP 1</shortName>
    </recommendedName>
</protein>
<evidence type="ECO:0000250" key="1"/>
<evidence type="ECO:0000255" key="2">
    <source>
        <dbReference type="HAMAP-Rule" id="MF_01217"/>
    </source>
</evidence>
<evidence type="ECO:0000255" key="3">
    <source>
        <dbReference type="PROSITE-ProRule" id="PRU00258"/>
    </source>
</evidence>
<evidence type="ECO:0000305" key="4"/>
<proteinExistence type="inferred from homology"/>
<gene>
    <name evidence="2" type="primary">acpP1</name>
    <name type="synonym">acpP</name>
    <name type="ordered locus">PA2966</name>
</gene>
<keyword id="KW-0963">Cytoplasm</keyword>
<keyword id="KW-0275">Fatty acid biosynthesis</keyword>
<keyword id="KW-0276">Fatty acid metabolism</keyword>
<keyword id="KW-0444">Lipid biosynthesis</keyword>
<keyword id="KW-0443">Lipid metabolism</keyword>
<keyword id="KW-0596">Phosphopantetheine</keyword>
<keyword id="KW-0597">Phosphoprotein</keyword>
<keyword id="KW-1185">Reference proteome</keyword>
<accession>O54439</accession>
<name>ACP1_PSEAE</name>
<feature type="initiator methionine" description="Removed" evidence="1">
    <location>
        <position position="1"/>
    </location>
</feature>
<feature type="chain" id="PRO_0000180167" description="Acyl carrier protein 1">
    <location>
        <begin position="2"/>
        <end position="78"/>
    </location>
</feature>
<feature type="domain" description="Carrier" evidence="3">
    <location>
        <begin position="2"/>
        <end position="77"/>
    </location>
</feature>
<feature type="modified residue" description="O-(pantetheine 4'-phosphoryl)serine" evidence="3">
    <location>
        <position position="37"/>
    </location>
</feature>
<feature type="sequence conflict" description="In Ref. 1; AAB94392." evidence="4" ref="1">
    <original>H</original>
    <variation>P</variation>
    <location>
        <position position="76"/>
    </location>
</feature>
<dbReference type="EMBL" id="U91631">
    <property type="protein sequence ID" value="AAB94392.1"/>
    <property type="molecule type" value="Genomic_DNA"/>
</dbReference>
<dbReference type="EMBL" id="AE004091">
    <property type="protein sequence ID" value="AAG06354.1"/>
    <property type="molecule type" value="Genomic_DNA"/>
</dbReference>
<dbReference type="PIR" id="A83276">
    <property type="entry name" value="A83276"/>
</dbReference>
<dbReference type="PIR" id="T12021">
    <property type="entry name" value="T12021"/>
</dbReference>
<dbReference type="RefSeq" id="NP_251656.1">
    <property type="nucleotide sequence ID" value="NC_002516.2"/>
</dbReference>
<dbReference type="RefSeq" id="WP_003091135.1">
    <property type="nucleotide sequence ID" value="NZ_QZGE01000009.1"/>
</dbReference>
<dbReference type="BMRB" id="O54439"/>
<dbReference type="SMR" id="O54439"/>
<dbReference type="FunCoup" id="O54439">
    <property type="interactions" value="682"/>
</dbReference>
<dbReference type="IntAct" id="O54439">
    <property type="interactions" value="2"/>
</dbReference>
<dbReference type="STRING" id="208964.PA2966"/>
<dbReference type="PaxDb" id="208964-PA2966"/>
<dbReference type="DNASU" id="879895"/>
<dbReference type="GeneID" id="77220543"/>
<dbReference type="GeneID" id="879895"/>
<dbReference type="KEGG" id="pae:PA2966"/>
<dbReference type="PATRIC" id="fig|208964.12.peg.3112"/>
<dbReference type="PseudoCAP" id="PA2966"/>
<dbReference type="HOGENOM" id="CLU_108696_5_1_6"/>
<dbReference type="InParanoid" id="O54439"/>
<dbReference type="OrthoDB" id="9804551at2"/>
<dbReference type="PhylomeDB" id="O54439"/>
<dbReference type="BioCyc" id="PAER208964:G1FZ6-3018-MONOMER"/>
<dbReference type="UniPathway" id="UPA00094"/>
<dbReference type="Proteomes" id="UP000002438">
    <property type="component" value="Chromosome"/>
</dbReference>
<dbReference type="GO" id="GO:0005829">
    <property type="term" value="C:cytosol"/>
    <property type="evidence" value="ECO:0000318"/>
    <property type="project" value="GO_Central"/>
</dbReference>
<dbReference type="GO" id="GO:0016020">
    <property type="term" value="C:membrane"/>
    <property type="evidence" value="ECO:0007669"/>
    <property type="project" value="GOC"/>
</dbReference>
<dbReference type="GO" id="GO:0000035">
    <property type="term" value="F:acyl binding"/>
    <property type="evidence" value="ECO:0000318"/>
    <property type="project" value="GO_Central"/>
</dbReference>
<dbReference type="GO" id="GO:0000036">
    <property type="term" value="F:acyl carrier activity"/>
    <property type="evidence" value="ECO:0000318"/>
    <property type="project" value="GO_Central"/>
</dbReference>
<dbReference type="GO" id="GO:0031177">
    <property type="term" value="F:phosphopantetheine binding"/>
    <property type="evidence" value="ECO:0007669"/>
    <property type="project" value="InterPro"/>
</dbReference>
<dbReference type="GO" id="GO:0009245">
    <property type="term" value="P:lipid A biosynthetic process"/>
    <property type="evidence" value="ECO:0000318"/>
    <property type="project" value="GO_Central"/>
</dbReference>
<dbReference type="FunFam" id="1.10.1200.10:FF:000001">
    <property type="entry name" value="Acyl carrier protein"/>
    <property type="match status" value="1"/>
</dbReference>
<dbReference type="Gene3D" id="1.10.1200.10">
    <property type="entry name" value="ACP-like"/>
    <property type="match status" value="1"/>
</dbReference>
<dbReference type="HAMAP" id="MF_01217">
    <property type="entry name" value="Acyl_carrier"/>
    <property type="match status" value="1"/>
</dbReference>
<dbReference type="InterPro" id="IPR003231">
    <property type="entry name" value="ACP"/>
</dbReference>
<dbReference type="InterPro" id="IPR036736">
    <property type="entry name" value="ACP-like_sf"/>
</dbReference>
<dbReference type="InterPro" id="IPR020806">
    <property type="entry name" value="PKS_PP-bd"/>
</dbReference>
<dbReference type="InterPro" id="IPR009081">
    <property type="entry name" value="PP-bd_ACP"/>
</dbReference>
<dbReference type="InterPro" id="IPR006162">
    <property type="entry name" value="Ppantetheine_attach_site"/>
</dbReference>
<dbReference type="NCBIfam" id="TIGR00517">
    <property type="entry name" value="acyl_carrier"/>
    <property type="match status" value="1"/>
</dbReference>
<dbReference type="NCBIfam" id="NF002148">
    <property type="entry name" value="PRK00982.1-2"/>
    <property type="match status" value="1"/>
</dbReference>
<dbReference type="NCBIfam" id="NF002149">
    <property type="entry name" value="PRK00982.1-3"/>
    <property type="match status" value="1"/>
</dbReference>
<dbReference type="NCBIfam" id="NF002150">
    <property type="entry name" value="PRK00982.1-4"/>
    <property type="match status" value="1"/>
</dbReference>
<dbReference type="NCBIfam" id="NF002151">
    <property type="entry name" value="PRK00982.1-5"/>
    <property type="match status" value="1"/>
</dbReference>
<dbReference type="PANTHER" id="PTHR20863">
    <property type="entry name" value="ACYL CARRIER PROTEIN"/>
    <property type="match status" value="1"/>
</dbReference>
<dbReference type="PANTHER" id="PTHR20863:SF76">
    <property type="entry name" value="CARRIER DOMAIN-CONTAINING PROTEIN"/>
    <property type="match status" value="1"/>
</dbReference>
<dbReference type="Pfam" id="PF00550">
    <property type="entry name" value="PP-binding"/>
    <property type="match status" value="1"/>
</dbReference>
<dbReference type="SMART" id="SM00823">
    <property type="entry name" value="PKS_PP"/>
    <property type="match status" value="1"/>
</dbReference>
<dbReference type="SUPFAM" id="SSF47336">
    <property type="entry name" value="ACP-like"/>
    <property type="match status" value="1"/>
</dbReference>
<dbReference type="PROSITE" id="PS50075">
    <property type="entry name" value="CARRIER"/>
    <property type="match status" value="1"/>
</dbReference>
<dbReference type="PROSITE" id="PS00012">
    <property type="entry name" value="PHOSPHOPANTETHEINE"/>
    <property type="match status" value="1"/>
</dbReference>
<sequence length="78" mass="8741">MSTIEERVKKIVAEQLGVKEEEVTNSASFVEDLGADSLDTVELVMALEEEFETEIPDEKAEKITTVQEAIDYIVAHQQ</sequence>